<sequence length="218" mass="22963">MGGVSTARPVIGVLALQGGVAEHLTALERSGAEARPVRRPEELAQVHGLVLPGGESTAMTRLLDGFELFEPLRERLAAGMPAFGSCAGMVLLAGTVLDDRVEQDTPPVRPFGAIDMAVRRNAFGRQVDSFEADLDFAGVTDGPVHAVFIRAPWVDKVGADVRVLASVAPSGHGSEVTAPAGRIVAVQQGPVLATAFHPELVSGDERVHRYFVQTVRAS</sequence>
<organism>
    <name type="scientific">Saccharopolyspora erythraea (strain ATCC 11635 / DSM 40517 / JCM 4748 / NBRC 13426 / NCIMB 8594 / NRRL 2338)</name>
    <dbReference type="NCBI Taxonomy" id="405948"/>
    <lineage>
        <taxon>Bacteria</taxon>
        <taxon>Bacillati</taxon>
        <taxon>Actinomycetota</taxon>
        <taxon>Actinomycetes</taxon>
        <taxon>Pseudonocardiales</taxon>
        <taxon>Pseudonocardiaceae</taxon>
        <taxon>Saccharopolyspora</taxon>
    </lineage>
</organism>
<proteinExistence type="inferred from homology"/>
<accession>A4FBA2</accession>
<gene>
    <name evidence="1" type="primary">pdxT</name>
    <name type="ordered locus">SACE_2017</name>
</gene>
<protein>
    <recommendedName>
        <fullName evidence="1">Pyridoxal 5'-phosphate synthase subunit PdxT</fullName>
        <ecNumber evidence="1">4.3.3.6</ecNumber>
    </recommendedName>
    <alternativeName>
        <fullName evidence="1">Pdx2</fullName>
    </alternativeName>
    <alternativeName>
        <fullName evidence="1">Pyridoxal 5'-phosphate synthase glutaminase subunit</fullName>
        <ecNumber evidence="1">3.5.1.2</ecNumber>
    </alternativeName>
</protein>
<feature type="chain" id="PRO_0000293012" description="Pyridoxal 5'-phosphate synthase subunit PdxT">
    <location>
        <begin position="1"/>
        <end position="218"/>
    </location>
</feature>
<feature type="active site" description="Nucleophile" evidence="1">
    <location>
        <position position="86"/>
    </location>
</feature>
<feature type="active site" description="Charge relay system" evidence="1">
    <location>
        <position position="197"/>
    </location>
</feature>
<feature type="active site" description="Charge relay system" evidence="1">
    <location>
        <position position="199"/>
    </location>
</feature>
<feature type="binding site" evidence="1">
    <location>
        <begin position="54"/>
        <end position="56"/>
    </location>
    <ligand>
        <name>L-glutamine</name>
        <dbReference type="ChEBI" id="CHEBI:58359"/>
    </ligand>
</feature>
<feature type="binding site" evidence="1">
    <location>
        <position position="120"/>
    </location>
    <ligand>
        <name>L-glutamine</name>
        <dbReference type="ChEBI" id="CHEBI:58359"/>
    </ligand>
</feature>
<feature type="binding site" evidence="1">
    <location>
        <begin position="149"/>
        <end position="150"/>
    </location>
    <ligand>
        <name>L-glutamine</name>
        <dbReference type="ChEBI" id="CHEBI:58359"/>
    </ligand>
</feature>
<comment type="function">
    <text evidence="1">Catalyzes the hydrolysis of glutamine to glutamate and ammonia as part of the biosynthesis of pyridoxal 5'-phosphate. The resulting ammonia molecule is channeled to the active site of PdxS.</text>
</comment>
<comment type="catalytic activity">
    <reaction evidence="1">
        <text>aldehydo-D-ribose 5-phosphate + D-glyceraldehyde 3-phosphate + L-glutamine = pyridoxal 5'-phosphate + L-glutamate + phosphate + 3 H2O + H(+)</text>
        <dbReference type="Rhea" id="RHEA:31507"/>
        <dbReference type="ChEBI" id="CHEBI:15377"/>
        <dbReference type="ChEBI" id="CHEBI:15378"/>
        <dbReference type="ChEBI" id="CHEBI:29985"/>
        <dbReference type="ChEBI" id="CHEBI:43474"/>
        <dbReference type="ChEBI" id="CHEBI:58273"/>
        <dbReference type="ChEBI" id="CHEBI:58359"/>
        <dbReference type="ChEBI" id="CHEBI:59776"/>
        <dbReference type="ChEBI" id="CHEBI:597326"/>
        <dbReference type="EC" id="4.3.3.6"/>
    </reaction>
</comment>
<comment type="catalytic activity">
    <reaction evidence="1">
        <text>L-glutamine + H2O = L-glutamate + NH4(+)</text>
        <dbReference type="Rhea" id="RHEA:15889"/>
        <dbReference type="ChEBI" id="CHEBI:15377"/>
        <dbReference type="ChEBI" id="CHEBI:28938"/>
        <dbReference type="ChEBI" id="CHEBI:29985"/>
        <dbReference type="ChEBI" id="CHEBI:58359"/>
        <dbReference type="EC" id="3.5.1.2"/>
    </reaction>
</comment>
<comment type="pathway">
    <text evidence="1">Cofactor biosynthesis; pyridoxal 5'-phosphate biosynthesis.</text>
</comment>
<comment type="subunit">
    <text evidence="1">In the presence of PdxS, forms a dodecamer of heterodimers. Only shows activity in the heterodimer.</text>
</comment>
<comment type="similarity">
    <text evidence="1">Belongs to the glutaminase PdxT/SNO family.</text>
</comment>
<evidence type="ECO:0000255" key="1">
    <source>
        <dbReference type="HAMAP-Rule" id="MF_01615"/>
    </source>
</evidence>
<reference key="1">
    <citation type="journal article" date="2007" name="Nat. Biotechnol.">
        <title>Complete genome sequence of the erythromycin-producing bacterium Saccharopolyspora erythraea NRRL23338.</title>
        <authorList>
            <person name="Oliynyk M."/>
            <person name="Samborskyy M."/>
            <person name="Lester J.B."/>
            <person name="Mironenko T."/>
            <person name="Scott N."/>
            <person name="Dickens S."/>
            <person name="Haydock S.F."/>
            <person name="Leadlay P.F."/>
        </authorList>
    </citation>
    <scope>NUCLEOTIDE SEQUENCE [LARGE SCALE GENOMIC DNA]</scope>
    <source>
        <strain>ATCC 11635 / DSM 40517 / JCM 4748 / NBRC 13426 / NCIMB 8594 / NRRL 2338</strain>
    </source>
</reference>
<name>PDXT_SACEN</name>
<dbReference type="EC" id="4.3.3.6" evidence="1"/>
<dbReference type="EC" id="3.5.1.2" evidence="1"/>
<dbReference type="EMBL" id="AM420293">
    <property type="protein sequence ID" value="CAM01327.1"/>
    <property type="molecule type" value="Genomic_DNA"/>
</dbReference>
<dbReference type="RefSeq" id="WP_011873536.1">
    <property type="nucleotide sequence ID" value="NC_009142.1"/>
</dbReference>
<dbReference type="SMR" id="A4FBA2"/>
<dbReference type="STRING" id="405948.SACE_2017"/>
<dbReference type="KEGG" id="sen:SACE_2017"/>
<dbReference type="eggNOG" id="COG0311">
    <property type="taxonomic scope" value="Bacteria"/>
</dbReference>
<dbReference type="HOGENOM" id="CLU_069674_2_0_11"/>
<dbReference type="OrthoDB" id="9810320at2"/>
<dbReference type="UniPathway" id="UPA00245"/>
<dbReference type="Proteomes" id="UP000006728">
    <property type="component" value="Chromosome"/>
</dbReference>
<dbReference type="GO" id="GO:0005829">
    <property type="term" value="C:cytosol"/>
    <property type="evidence" value="ECO:0007669"/>
    <property type="project" value="TreeGrafter"/>
</dbReference>
<dbReference type="GO" id="GO:1903600">
    <property type="term" value="C:glutaminase complex"/>
    <property type="evidence" value="ECO:0007669"/>
    <property type="project" value="TreeGrafter"/>
</dbReference>
<dbReference type="GO" id="GO:0004359">
    <property type="term" value="F:glutaminase activity"/>
    <property type="evidence" value="ECO:0007669"/>
    <property type="project" value="UniProtKB-UniRule"/>
</dbReference>
<dbReference type="GO" id="GO:0036381">
    <property type="term" value="F:pyridoxal 5'-phosphate synthase (glutamine hydrolysing) activity"/>
    <property type="evidence" value="ECO:0007669"/>
    <property type="project" value="UniProtKB-UniRule"/>
</dbReference>
<dbReference type="GO" id="GO:0006543">
    <property type="term" value="P:glutamine catabolic process"/>
    <property type="evidence" value="ECO:0007669"/>
    <property type="project" value="UniProtKB-UniRule"/>
</dbReference>
<dbReference type="GO" id="GO:0042823">
    <property type="term" value="P:pyridoxal phosphate biosynthetic process"/>
    <property type="evidence" value="ECO:0007669"/>
    <property type="project" value="UniProtKB-UniRule"/>
</dbReference>
<dbReference type="GO" id="GO:0008614">
    <property type="term" value="P:pyridoxine metabolic process"/>
    <property type="evidence" value="ECO:0007669"/>
    <property type="project" value="TreeGrafter"/>
</dbReference>
<dbReference type="CDD" id="cd01749">
    <property type="entry name" value="GATase1_PB"/>
    <property type="match status" value="1"/>
</dbReference>
<dbReference type="FunFam" id="3.40.50.880:FF:000010">
    <property type="entry name" value="uncharacterized protein LOC100176842 isoform X2"/>
    <property type="match status" value="1"/>
</dbReference>
<dbReference type="Gene3D" id="3.40.50.880">
    <property type="match status" value="1"/>
</dbReference>
<dbReference type="HAMAP" id="MF_01615">
    <property type="entry name" value="PdxT"/>
    <property type="match status" value="1"/>
</dbReference>
<dbReference type="InterPro" id="IPR029062">
    <property type="entry name" value="Class_I_gatase-like"/>
</dbReference>
<dbReference type="InterPro" id="IPR002161">
    <property type="entry name" value="PdxT/SNO"/>
</dbReference>
<dbReference type="InterPro" id="IPR021196">
    <property type="entry name" value="PdxT/SNO_CS"/>
</dbReference>
<dbReference type="NCBIfam" id="TIGR03800">
    <property type="entry name" value="PLP_synth_Pdx2"/>
    <property type="match status" value="1"/>
</dbReference>
<dbReference type="PANTHER" id="PTHR31559">
    <property type="entry name" value="PYRIDOXAL 5'-PHOSPHATE SYNTHASE SUBUNIT SNO"/>
    <property type="match status" value="1"/>
</dbReference>
<dbReference type="PANTHER" id="PTHR31559:SF0">
    <property type="entry name" value="PYRIDOXAL 5'-PHOSPHATE SYNTHASE SUBUNIT SNO1-RELATED"/>
    <property type="match status" value="1"/>
</dbReference>
<dbReference type="Pfam" id="PF01174">
    <property type="entry name" value="SNO"/>
    <property type="match status" value="1"/>
</dbReference>
<dbReference type="PIRSF" id="PIRSF005639">
    <property type="entry name" value="Glut_amidoT_SNO"/>
    <property type="match status" value="1"/>
</dbReference>
<dbReference type="SUPFAM" id="SSF52317">
    <property type="entry name" value="Class I glutamine amidotransferase-like"/>
    <property type="match status" value="1"/>
</dbReference>
<dbReference type="PROSITE" id="PS01236">
    <property type="entry name" value="PDXT_SNO_1"/>
    <property type="match status" value="1"/>
</dbReference>
<dbReference type="PROSITE" id="PS51130">
    <property type="entry name" value="PDXT_SNO_2"/>
    <property type="match status" value="1"/>
</dbReference>
<keyword id="KW-0315">Glutamine amidotransferase</keyword>
<keyword id="KW-0378">Hydrolase</keyword>
<keyword id="KW-0456">Lyase</keyword>
<keyword id="KW-0663">Pyridoxal phosphate</keyword>
<keyword id="KW-1185">Reference proteome</keyword>